<organism>
    <name type="scientific">Sulfurisphaera tokodaii (strain DSM 16993 / JCM 10545 / NBRC 100140 / 7)</name>
    <name type="common">Sulfolobus tokodaii</name>
    <dbReference type="NCBI Taxonomy" id="273063"/>
    <lineage>
        <taxon>Archaea</taxon>
        <taxon>Thermoproteota</taxon>
        <taxon>Thermoprotei</taxon>
        <taxon>Sulfolobales</taxon>
        <taxon>Sulfolobaceae</taxon>
        <taxon>Sulfurisphaera</taxon>
    </lineage>
</organism>
<reference key="1">
    <citation type="journal article" date="2001" name="DNA Res.">
        <title>Complete genome sequence of an aerobic thermoacidophilic Crenarchaeon, Sulfolobus tokodaii strain7.</title>
        <authorList>
            <person name="Kawarabayasi Y."/>
            <person name="Hino Y."/>
            <person name="Horikawa H."/>
            <person name="Jin-no K."/>
            <person name="Takahashi M."/>
            <person name="Sekine M."/>
            <person name="Baba S."/>
            <person name="Ankai A."/>
            <person name="Kosugi H."/>
            <person name="Hosoyama A."/>
            <person name="Fukui S."/>
            <person name="Nagai Y."/>
            <person name="Nishijima K."/>
            <person name="Otsuka R."/>
            <person name="Nakazawa H."/>
            <person name="Takamiya M."/>
            <person name="Kato Y."/>
            <person name="Yoshizawa T."/>
            <person name="Tanaka T."/>
            <person name="Kudoh Y."/>
            <person name="Yamazaki J."/>
            <person name="Kushida N."/>
            <person name="Oguchi A."/>
            <person name="Aoki K."/>
            <person name="Masuda S."/>
            <person name="Yanagii M."/>
            <person name="Nishimura M."/>
            <person name="Yamagishi A."/>
            <person name="Oshima T."/>
            <person name="Kikuchi H."/>
        </authorList>
    </citation>
    <scope>NUCLEOTIDE SEQUENCE [LARGE SCALE GENOMIC DNA]</scope>
    <source>
        <strain>DSM 16993 / JCM 10545 / NBRC 100140 / 7</strain>
    </source>
</reference>
<feature type="initiator methionine" description="Removed" evidence="1">
    <location>
        <position position="1"/>
    </location>
</feature>
<feature type="chain" id="PRO_0000159181" description="Zinc-containing ferredoxin-2">
    <location>
        <begin position="2"/>
        <end position="104"/>
    </location>
</feature>
<feature type="domain" description="4Fe-4S ferredoxin-type 1" evidence="2">
    <location>
        <begin position="38"/>
        <end position="66"/>
    </location>
</feature>
<feature type="domain" description="4Fe-4S ferredoxin-type 2" evidence="2">
    <location>
        <begin position="75"/>
        <end position="104"/>
    </location>
</feature>
<feature type="region of interest" description="N-terminal extension" evidence="1">
    <location>
        <begin position="2"/>
        <end position="37"/>
    </location>
</feature>
<feature type="binding site" evidence="1">
    <location>
        <position position="17"/>
    </location>
    <ligand>
        <name>Zn(2+)</name>
        <dbReference type="ChEBI" id="CHEBI:29105"/>
    </ligand>
</feature>
<feature type="binding site" evidence="1">
    <location>
        <position position="20"/>
    </location>
    <ligand>
        <name>Zn(2+)</name>
        <dbReference type="ChEBI" id="CHEBI:29105"/>
    </ligand>
</feature>
<feature type="binding site" evidence="1">
    <location>
        <position position="35"/>
    </location>
    <ligand>
        <name>Zn(2+)</name>
        <dbReference type="ChEBI" id="CHEBI:29105"/>
    </ligand>
</feature>
<feature type="binding site" evidence="1">
    <location>
        <position position="46"/>
    </location>
    <ligand>
        <name>[3Fe-4S] cluster</name>
        <dbReference type="ChEBI" id="CHEBI:21137"/>
    </ligand>
</feature>
<feature type="binding site" evidence="1">
    <location>
        <position position="52"/>
    </location>
    <ligand>
        <name>[3Fe-4S] cluster</name>
        <dbReference type="ChEBI" id="CHEBI:21137"/>
    </ligand>
</feature>
<feature type="binding site" evidence="1">
    <location>
        <position position="56"/>
    </location>
    <ligand>
        <name>[4Fe-4S] cluster</name>
        <dbReference type="ChEBI" id="CHEBI:49883"/>
    </ligand>
</feature>
<feature type="binding site" evidence="1">
    <location>
        <position position="77"/>
    </location>
    <ligand>
        <name>Zn(2+)</name>
        <dbReference type="ChEBI" id="CHEBI:29105"/>
    </ligand>
</feature>
<feature type="binding site" evidence="1">
    <location>
        <position position="84"/>
    </location>
    <ligand>
        <name>[4Fe-4S] cluster</name>
        <dbReference type="ChEBI" id="CHEBI:49883"/>
    </ligand>
</feature>
<feature type="binding site" evidence="1">
    <location>
        <position position="87"/>
    </location>
    <ligand>
        <name>[4Fe-4S] cluster</name>
        <dbReference type="ChEBI" id="CHEBI:49883"/>
    </ligand>
</feature>
<feature type="binding site" evidence="1">
    <location>
        <position position="90"/>
    </location>
    <ligand>
        <name>[4Fe-4S] cluster</name>
        <dbReference type="ChEBI" id="CHEBI:49883"/>
    </ligand>
</feature>
<feature type="binding site" evidence="1">
    <location>
        <position position="94"/>
    </location>
    <ligand>
        <name>[3Fe-4S] cluster</name>
        <dbReference type="ChEBI" id="CHEBI:21137"/>
    </ligand>
</feature>
<protein>
    <recommendedName>
        <fullName>Zinc-containing ferredoxin-2</fullName>
    </recommendedName>
</protein>
<name>FER2_SULTO</name>
<gene>
    <name type="primary">zfx2</name>
    <name type="ordered locus">STK_11750</name>
</gene>
<sequence length="104" mass="11159">MGIDPNYRQNRQVVGEHEGHKIYGPVEPPGKLGIHGTIVGVDFDVCIADGSCINACPVNVFQWFDTPGHPASEKKADPINEKACIFCMACVNVCPVAAIDVKPP</sequence>
<comment type="function">
    <text evidence="1">Ferredoxins are iron-sulfur proteins that transfer electrons in a wide variety of metabolic reactions.</text>
</comment>
<comment type="cofactor">
    <cofactor evidence="1">
        <name>[3Fe-4S] cluster</name>
        <dbReference type="ChEBI" id="CHEBI:21137"/>
    </cofactor>
    <text evidence="1">Binds 1 [3Fe-4S] cluster.</text>
</comment>
<comment type="cofactor">
    <cofactor evidence="1">
        <name>[4Fe-4S] cluster</name>
        <dbReference type="ChEBI" id="CHEBI:49883"/>
    </cofactor>
    <text evidence="1">Binds 1 [4Fe-4S] cluster.</text>
</comment>
<comment type="cofactor">
    <cofactor evidence="1">
        <name>Zn(2+)</name>
        <dbReference type="ChEBI" id="CHEBI:29105"/>
    </cofactor>
    <text evidence="1">Binds 1 zinc ion.</text>
</comment>
<dbReference type="EMBL" id="BA000023">
    <property type="protein sequence ID" value="BAB66210.1"/>
    <property type="molecule type" value="Genomic_DNA"/>
</dbReference>
<dbReference type="RefSeq" id="WP_010979189.1">
    <property type="nucleotide sequence ID" value="NC_003106.2"/>
</dbReference>
<dbReference type="SMR" id="P58331"/>
<dbReference type="STRING" id="273063.STK_11750"/>
<dbReference type="GeneID" id="1459164"/>
<dbReference type="KEGG" id="sto:STK_11750"/>
<dbReference type="PATRIC" id="fig|273063.9.peg.1326"/>
<dbReference type="eggNOG" id="arCOG04548">
    <property type="taxonomic scope" value="Archaea"/>
</dbReference>
<dbReference type="OrthoDB" id="23833at2157"/>
<dbReference type="Proteomes" id="UP000001015">
    <property type="component" value="Chromosome"/>
</dbReference>
<dbReference type="GO" id="GO:0051538">
    <property type="term" value="F:3 iron, 4 sulfur cluster binding"/>
    <property type="evidence" value="ECO:0007669"/>
    <property type="project" value="UniProtKB-KW"/>
</dbReference>
<dbReference type="GO" id="GO:0051539">
    <property type="term" value="F:4 iron, 4 sulfur cluster binding"/>
    <property type="evidence" value="ECO:0007669"/>
    <property type="project" value="UniProtKB-KW"/>
</dbReference>
<dbReference type="GO" id="GO:0009055">
    <property type="term" value="F:electron transfer activity"/>
    <property type="evidence" value="ECO:0007669"/>
    <property type="project" value="InterPro"/>
</dbReference>
<dbReference type="GO" id="GO:0016491">
    <property type="term" value="F:oxidoreductase activity"/>
    <property type="evidence" value="ECO:0007669"/>
    <property type="project" value="UniProtKB-ARBA"/>
</dbReference>
<dbReference type="GO" id="GO:0008270">
    <property type="term" value="F:zinc ion binding"/>
    <property type="evidence" value="ECO:0007669"/>
    <property type="project" value="InterPro"/>
</dbReference>
<dbReference type="Gene3D" id="3.30.70.20">
    <property type="match status" value="1"/>
</dbReference>
<dbReference type="InterPro" id="IPR017896">
    <property type="entry name" value="4Fe4S_Fe-S-bd"/>
</dbReference>
<dbReference type="InterPro" id="IPR017900">
    <property type="entry name" value="4Fe4S_Fe_S_CS"/>
</dbReference>
<dbReference type="InterPro" id="IPR009157">
    <property type="entry name" value="Fd_Zn-bd"/>
</dbReference>
<dbReference type="InterPro" id="IPR050572">
    <property type="entry name" value="Fe-S_Ferredoxin"/>
</dbReference>
<dbReference type="PANTHER" id="PTHR43687">
    <property type="entry name" value="ADENYLYLSULFATE REDUCTASE, BETA SUBUNIT"/>
    <property type="match status" value="1"/>
</dbReference>
<dbReference type="PANTHER" id="PTHR43687:SF6">
    <property type="entry name" value="L-ASPARTATE SEMIALDEHYDE SULFURTRANSFERASE IRON-SULFUR SUBUNIT"/>
    <property type="match status" value="1"/>
</dbReference>
<dbReference type="Pfam" id="PF13237">
    <property type="entry name" value="Fer4_10"/>
    <property type="match status" value="1"/>
</dbReference>
<dbReference type="PIRSF" id="PIRSF000068">
    <property type="entry name" value="Zn_Fdx_Sulfol"/>
    <property type="match status" value="1"/>
</dbReference>
<dbReference type="SUPFAM" id="SSF54862">
    <property type="entry name" value="4Fe-4S ferredoxins"/>
    <property type="match status" value="1"/>
</dbReference>
<dbReference type="PROSITE" id="PS00198">
    <property type="entry name" value="4FE4S_FER_1"/>
    <property type="match status" value="1"/>
</dbReference>
<dbReference type="PROSITE" id="PS51379">
    <property type="entry name" value="4FE4S_FER_2"/>
    <property type="match status" value="2"/>
</dbReference>
<keyword id="KW-0003">3Fe-4S</keyword>
<keyword id="KW-0004">4Fe-4S</keyword>
<keyword id="KW-0249">Electron transport</keyword>
<keyword id="KW-0408">Iron</keyword>
<keyword id="KW-0411">Iron-sulfur</keyword>
<keyword id="KW-0479">Metal-binding</keyword>
<keyword id="KW-1185">Reference proteome</keyword>
<keyword id="KW-0677">Repeat</keyword>
<keyword id="KW-0813">Transport</keyword>
<keyword id="KW-0862">Zinc</keyword>
<accession>P58331</accession>
<proteinExistence type="inferred from homology"/>
<evidence type="ECO:0000250" key="1"/>
<evidence type="ECO:0000255" key="2">
    <source>
        <dbReference type="PROSITE-ProRule" id="PRU00711"/>
    </source>
</evidence>